<reference key="1">
    <citation type="submission" date="2007-02" db="EMBL/GenBank/DDBJ databases">
        <title>Complete sequence of chromosome 1 of Rhodobacter sphaeroides ATCC 17029.</title>
        <authorList>
            <person name="Copeland A."/>
            <person name="Lucas S."/>
            <person name="Lapidus A."/>
            <person name="Barry K."/>
            <person name="Detter J.C."/>
            <person name="Glavina del Rio T."/>
            <person name="Hammon N."/>
            <person name="Israni S."/>
            <person name="Dalin E."/>
            <person name="Tice H."/>
            <person name="Pitluck S."/>
            <person name="Kiss H."/>
            <person name="Brettin T."/>
            <person name="Bruce D."/>
            <person name="Han C."/>
            <person name="Tapia R."/>
            <person name="Gilna P."/>
            <person name="Schmutz J."/>
            <person name="Larimer F."/>
            <person name="Land M."/>
            <person name="Hauser L."/>
            <person name="Kyrpides N."/>
            <person name="Mikhailova N."/>
            <person name="Richardson P."/>
            <person name="Mackenzie C."/>
            <person name="Choudhary M."/>
            <person name="Donohue T.J."/>
            <person name="Kaplan S."/>
        </authorList>
    </citation>
    <scope>NUCLEOTIDE SEQUENCE [LARGE SCALE GENOMIC DNA]</scope>
    <source>
        <strain>ATCC 17029 / ATH 2.4.9</strain>
    </source>
</reference>
<evidence type="ECO:0000255" key="1">
    <source>
        <dbReference type="HAMAP-Rule" id="MF_00022"/>
    </source>
</evidence>
<gene>
    <name evidence="1" type="primary">gltX2</name>
    <name type="ordered locus">Rsph17029_2455</name>
</gene>
<protein>
    <recommendedName>
        <fullName evidence="1">Glutamate--tRNA ligase 2</fullName>
        <ecNumber evidence="1">6.1.1.17</ecNumber>
    </recommendedName>
    <alternativeName>
        <fullName evidence="1">Glutamyl-tRNA synthetase 2</fullName>
        <shortName evidence="1">GluRS 2</shortName>
    </alternativeName>
</protein>
<organism>
    <name type="scientific">Cereibacter sphaeroides (strain ATCC 17029 / ATH 2.4.9)</name>
    <name type="common">Rhodobacter sphaeroides</name>
    <dbReference type="NCBI Taxonomy" id="349101"/>
    <lineage>
        <taxon>Bacteria</taxon>
        <taxon>Pseudomonadati</taxon>
        <taxon>Pseudomonadota</taxon>
        <taxon>Alphaproteobacteria</taxon>
        <taxon>Rhodobacterales</taxon>
        <taxon>Paracoccaceae</taxon>
        <taxon>Cereibacter</taxon>
    </lineage>
</organism>
<keyword id="KW-0030">Aminoacyl-tRNA synthetase</keyword>
<keyword id="KW-0067">ATP-binding</keyword>
<keyword id="KW-0963">Cytoplasm</keyword>
<keyword id="KW-0436">Ligase</keyword>
<keyword id="KW-0547">Nucleotide-binding</keyword>
<keyword id="KW-0648">Protein biosynthesis</keyword>
<comment type="function">
    <text evidence="1">Catalyzes the attachment of glutamate to tRNA(Glu) in a two-step reaction: glutamate is first activated by ATP to form Glu-AMP and then transferred to the acceptor end of tRNA(Glu).</text>
</comment>
<comment type="catalytic activity">
    <reaction evidence="1">
        <text>tRNA(Glu) + L-glutamate + ATP = L-glutamyl-tRNA(Glu) + AMP + diphosphate</text>
        <dbReference type="Rhea" id="RHEA:23540"/>
        <dbReference type="Rhea" id="RHEA-COMP:9663"/>
        <dbReference type="Rhea" id="RHEA-COMP:9680"/>
        <dbReference type="ChEBI" id="CHEBI:29985"/>
        <dbReference type="ChEBI" id="CHEBI:30616"/>
        <dbReference type="ChEBI" id="CHEBI:33019"/>
        <dbReference type="ChEBI" id="CHEBI:78442"/>
        <dbReference type="ChEBI" id="CHEBI:78520"/>
        <dbReference type="ChEBI" id="CHEBI:456215"/>
        <dbReference type="EC" id="6.1.1.17"/>
    </reaction>
</comment>
<comment type="subunit">
    <text evidence="1">Monomer.</text>
</comment>
<comment type="subcellular location">
    <subcellularLocation>
        <location evidence="1">Cytoplasm</location>
    </subcellularLocation>
</comment>
<comment type="similarity">
    <text evidence="1">Belongs to the class-I aminoacyl-tRNA synthetase family. Glutamate--tRNA ligase type 1 subfamily.</text>
</comment>
<feature type="chain" id="PRO_0000367748" description="Glutamate--tRNA ligase 2">
    <location>
        <begin position="1"/>
        <end position="441"/>
    </location>
</feature>
<feature type="short sequence motif" description="'HIGH' region" evidence="1">
    <location>
        <begin position="9"/>
        <end position="19"/>
    </location>
</feature>
<feature type="short sequence motif" description="'KMSKS' region" evidence="1">
    <location>
        <begin position="239"/>
        <end position="243"/>
    </location>
</feature>
<feature type="binding site" evidence="1">
    <location>
        <position position="242"/>
    </location>
    <ligand>
        <name>ATP</name>
        <dbReference type="ChEBI" id="CHEBI:30616"/>
    </ligand>
</feature>
<name>SYE2_CERS1</name>
<accession>A3PMJ1</accession>
<proteinExistence type="inferred from homology"/>
<dbReference type="EC" id="6.1.1.17" evidence="1"/>
<dbReference type="EMBL" id="CP000577">
    <property type="protein sequence ID" value="ABN77557.1"/>
    <property type="molecule type" value="Genomic_DNA"/>
</dbReference>
<dbReference type="SMR" id="A3PMJ1"/>
<dbReference type="KEGG" id="rsh:Rsph17029_2455"/>
<dbReference type="HOGENOM" id="CLU_015768_6_1_5"/>
<dbReference type="GO" id="GO:0005737">
    <property type="term" value="C:cytoplasm"/>
    <property type="evidence" value="ECO:0007669"/>
    <property type="project" value="UniProtKB-SubCell"/>
</dbReference>
<dbReference type="GO" id="GO:0005524">
    <property type="term" value="F:ATP binding"/>
    <property type="evidence" value="ECO:0007669"/>
    <property type="project" value="UniProtKB-UniRule"/>
</dbReference>
<dbReference type="GO" id="GO:0004818">
    <property type="term" value="F:glutamate-tRNA ligase activity"/>
    <property type="evidence" value="ECO:0007669"/>
    <property type="project" value="UniProtKB-UniRule"/>
</dbReference>
<dbReference type="GO" id="GO:0000049">
    <property type="term" value="F:tRNA binding"/>
    <property type="evidence" value="ECO:0007669"/>
    <property type="project" value="InterPro"/>
</dbReference>
<dbReference type="GO" id="GO:0006424">
    <property type="term" value="P:glutamyl-tRNA aminoacylation"/>
    <property type="evidence" value="ECO:0007669"/>
    <property type="project" value="UniProtKB-UniRule"/>
</dbReference>
<dbReference type="Gene3D" id="1.10.10.350">
    <property type="match status" value="1"/>
</dbReference>
<dbReference type="Gene3D" id="3.40.50.620">
    <property type="entry name" value="HUPs"/>
    <property type="match status" value="1"/>
</dbReference>
<dbReference type="HAMAP" id="MF_00022">
    <property type="entry name" value="Glu_tRNA_synth_type1"/>
    <property type="match status" value="1"/>
</dbReference>
<dbReference type="InterPro" id="IPR045462">
    <property type="entry name" value="aa-tRNA-synth_I_cd-bd"/>
</dbReference>
<dbReference type="InterPro" id="IPR020751">
    <property type="entry name" value="aa-tRNA-synth_I_codon-bd_sub2"/>
</dbReference>
<dbReference type="InterPro" id="IPR001412">
    <property type="entry name" value="aa-tRNA-synth_I_CS"/>
</dbReference>
<dbReference type="InterPro" id="IPR008925">
    <property type="entry name" value="aa_tRNA-synth_I_cd-bd_sf"/>
</dbReference>
<dbReference type="InterPro" id="IPR004527">
    <property type="entry name" value="Glu-tRNA-ligase_bac/mito"/>
</dbReference>
<dbReference type="InterPro" id="IPR000924">
    <property type="entry name" value="Glu/Gln-tRNA-synth"/>
</dbReference>
<dbReference type="InterPro" id="IPR020058">
    <property type="entry name" value="Glu/Gln-tRNA-synth_Ib_cat-dom"/>
</dbReference>
<dbReference type="InterPro" id="IPR049940">
    <property type="entry name" value="GluQ/Sye"/>
</dbReference>
<dbReference type="InterPro" id="IPR014729">
    <property type="entry name" value="Rossmann-like_a/b/a_fold"/>
</dbReference>
<dbReference type="NCBIfam" id="TIGR00464">
    <property type="entry name" value="gltX_bact"/>
    <property type="match status" value="1"/>
</dbReference>
<dbReference type="PANTHER" id="PTHR43311">
    <property type="entry name" value="GLUTAMATE--TRNA LIGASE"/>
    <property type="match status" value="1"/>
</dbReference>
<dbReference type="PANTHER" id="PTHR43311:SF2">
    <property type="entry name" value="GLUTAMATE--TRNA LIGASE, MITOCHONDRIAL-RELATED"/>
    <property type="match status" value="1"/>
</dbReference>
<dbReference type="Pfam" id="PF19269">
    <property type="entry name" value="Anticodon_2"/>
    <property type="match status" value="1"/>
</dbReference>
<dbReference type="Pfam" id="PF00749">
    <property type="entry name" value="tRNA-synt_1c"/>
    <property type="match status" value="1"/>
</dbReference>
<dbReference type="PRINTS" id="PR00987">
    <property type="entry name" value="TRNASYNTHGLU"/>
</dbReference>
<dbReference type="SUPFAM" id="SSF48163">
    <property type="entry name" value="An anticodon-binding domain of class I aminoacyl-tRNA synthetases"/>
    <property type="match status" value="1"/>
</dbReference>
<dbReference type="SUPFAM" id="SSF52374">
    <property type="entry name" value="Nucleotidylyl transferase"/>
    <property type="match status" value="1"/>
</dbReference>
<dbReference type="PROSITE" id="PS00178">
    <property type="entry name" value="AA_TRNA_LIGASE_I"/>
    <property type="match status" value="1"/>
</dbReference>
<sequence length="441" mass="49077">MTTVTRFAPSPTGYIHVGNLRTALMNWAIARKSGGTFILRLDDTDRERSKQEYSDGIMEDLEWLGLTWDRLERQSDRLDRYAEAADELRRAGRFYECFESPTELDLKRKKLLNMGKPPVYDRAALKLSDEERARLRAERGGYWRFLLDQERIEWTDGILGPISIDAASVSDPVLIRADGQVLYTFASSVDDIDMGVTFIVRGGDHVTNTATQIQIMQALGGTPPSFAHHSLLTGAQGEALSKRLGTLSLRDLRARGVEPMALLSLMARLGSSQPVELFRTHEELLAGFDVSTFGAAPTKFDAEDLFPLTRHYVQGLPFEAVRGRIAALGVPDDLAEPFWRVAKDNIGVLEDLGGWWTLFSEGAEPQIDPEDEDFIRQAMTLLPPPPYGPESWAQFTAAVKEATGRKGKGLFMPLRKALTGQAHGPDMSEVMPLLQKVRAKG</sequence>